<organism>
    <name type="scientific">Rattus norvegicus</name>
    <name type="common">Rat</name>
    <dbReference type="NCBI Taxonomy" id="10116"/>
    <lineage>
        <taxon>Eukaryota</taxon>
        <taxon>Metazoa</taxon>
        <taxon>Chordata</taxon>
        <taxon>Craniata</taxon>
        <taxon>Vertebrata</taxon>
        <taxon>Euteleostomi</taxon>
        <taxon>Mammalia</taxon>
        <taxon>Eutheria</taxon>
        <taxon>Euarchontoglires</taxon>
        <taxon>Glires</taxon>
        <taxon>Rodentia</taxon>
        <taxon>Myomorpha</taxon>
        <taxon>Muroidea</taxon>
        <taxon>Muridae</taxon>
        <taxon>Murinae</taxon>
        <taxon>Rattus</taxon>
    </lineage>
</organism>
<sequence length="198" mass="22369">MKLYSLSVFYKGEPKAVLLKAAYDVSSFSFFQRSSVQEFMTFTSQLIVERSAKGSRASVKEQEYLCHVYVRSDSLAGVVIADSEYPSRVAFTLLEKVLDEFSKQVDRIDWPVGSPATIHYTALDGHLSRYQNPREADPMSKVQAELDETKIILHNTMESLLERGEKLDDLVSKSEVLGTQSKAFYKTARKQNSCCAIM</sequence>
<dbReference type="EC" id="2.3.1.-"/>
<dbReference type="EMBL" id="AF033027">
    <property type="protein sequence ID" value="AAD09152.1"/>
    <property type="molecule type" value="mRNA"/>
</dbReference>
<dbReference type="EMBL" id="AY881621">
    <property type="protein sequence ID" value="AAW81771.1"/>
    <property type="molecule type" value="mRNA"/>
</dbReference>
<dbReference type="RefSeq" id="NP_113880.2">
    <property type="nucleotide sequence ID" value="NM_031692.3"/>
</dbReference>
<dbReference type="PDB" id="3KYQ">
    <property type="method" value="X-ray"/>
    <property type="resolution" value="2.44 A"/>
    <property type="chains" value="A=1-198"/>
</dbReference>
<dbReference type="PDBsum" id="3KYQ"/>
<dbReference type="SMR" id="Q5EGY4"/>
<dbReference type="CORUM" id="Q5EGY4"/>
<dbReference type="FunCoup" id="Q5EGY4">
    <property type="interactions" value="3891"/>
</dbReference>
<dbReference type="IntAct" id="Q5EGY4">
    <property type="interactions" value="6"/>
</dbReference>
<dbReference type="STRING" id="10116.ENSRNOP00000020693"/>
<dbReference type="PhosphoSitePlus" id="Q5EGY4"/>
<dbReference type="jPOST" id="Q5EGY4"/>
<dbReference type="PaxDb" id="10116-ENSRNOP00000020693"/>
<dbReference type="Ensembl" id="ENSRNOT00000020693.4">
    <property type="protein sequence ID" value="ENSRNOP00000020693.1"/>
    <property type="gene ID" value="ENSRNOG00000014785.4"/>
</dbReference>
<dbReference type="GeneID" id="64351"/>
<dbReference type="KEGG" id="rno:64351"/>
<dbReference type="UCSC" id="RGD:70897">
    <property type="organism name" value="rat"/>
</dbReference>
<dbReference type="AGR" id="RGD:70897"/>
<dbReference type="CTD" id="10652"/>
<dbReference type="RGD" id="70897">
    <property type="gene designation" value="Ykt6"/>
</dbReference>
<dbReference type="eggNOG" id="KOG0861">
    <property type="taxonomic scope" value="Eukaryota"/>
</dbReference>
<dbReference type="GeneTree" id="ENSGT00390000015164"/>
<dbReference type="HOGENOM" id="CLU_074848_3_0_1"/>
<dbReference type="InParanoid" id="Q5EGY4"/>
<dbReference type="OMA" id="HYIGIIR"/>
<dbReference type="OrthoDB" id="27923at2759"/>
<dbReference type="PhylomeDB" id="Q5EGY4"/>
<dbReference type="TreeFam" id="TF105606"/>
<dbReference type="Reactome" id="R-RNO-204005">
    <property type="pathway name" value="COPII-mediated vesicle transport"/>
</dbReference>
<dbReference type="Reactome" id="R-RNO-6807878">
    <property type="pathway name" value="COPI-mediated anterograde transport"/>
</dbReference>
<dbReference type="Reactome" id="R-RNO-6811438">
    <property type="pathway name" value="Intra-Golgi traffic"/>
</dbReference>
<dbReference type="Reactome" id="R-RNO-8980692">
    <property type="pathway name" value="RHOA GTPase cycle"/>
</dbReference>
<dbReference type="Reactome" id="R-RNO-9013148">
    <property type="pathway name" value="CDC42 GTPase cycle"/>
</dbReference>
<dbReference type="Reactome" id="R-RNO-9013149">
    <property type="pathway name" value="RAC1 GTPase cycle"/>
</dbReference>
<dbReference type="Reactome" id="R-RNO-9013408">
    <property type="pathway name" value="RHOG GTPase cycle"/>
</dbReference>
<dbReference type="EvolutionaryTrace" id="Q5EGY4"/>
<dbReference type="PRO" id="PR:Q5EGY4"/>
<dbReference type="Proteomes" id="UP000002494">
    <property type="component" value="Chromosome 14"/>
</dbReference>
<dbReference type="Bgee" id="ENSRNOG00000014785">
    <property type="expression patterns" value="Expressed in stomach and 20 other cell types or tissues"/>
</dbReference>
<dbReference type="GO" id="GO:0097440">
    <property type="term" value="C:apical dendrite"/>
    <property type="evidence" value="ECO:0000314"/>
    <property type="project" value="RGD"/>
</dbReference>
<dbReference type="GO" id="GO:0097441">
    <property type="term" value="C:basal dendrite"/>
    <property type="evidence" value="ECO:0000314"/>
    <property type="project" value="RGD"/>
</dbReference>
<dbReference type="GO" id="GO:0005737">
    <property type="term" value="C:cytoplasm"/>
    <property type="evidence" value="ECO:0000266"/>
    <property type="project" value="RGD"/>
</dbReference>
<dbReference type="GO" id="GO:0030659">
    <property type="term" value="C:cytoplasmic vesicle membrane"/>
    <property type="evidence" value="ECO:0007669"/>
    <property type="project" value="UniProtKB-SubCell"/>
</dbReference>
<dbReference type="GO" id="GO:0005829">
    <property type="term" value="C:cytosol"/>
    <property type="evidence" value="ECO:0007669"/>
    <property type="project" value="UniProtKB-SubCell"/>
</dbReference>
<dbReference type="GO" id="GO:0005783">
    <property type="term" value="C:endoplasmic reticulum"/>
    <property type="evidence" value="ECO:0000250"/>
    <property type="project" value="HGNC-UCL"/>
</dbReference>
<dbReference type="GO" id="GO:0005768">
    <property type="term" value="C:endosome"/>
    <property type="evidence" value="ECO:0000266"/>
    <property type="project" value="RGD"/>
</dbReference>
<dbReference type="GO" id="GO:0005794">
    <property type="term" value="C:Golgi apparatus"/>
    <property type="evidence" value="ECO:0000266"/>
    <property type="project" value="RGD"/>
</dbReference>
<dbReference type="GO" id="GO:0000139">
    <property type="term" value="C:Golgi membrane"/>
    <property type="evidence" value="ECO:0007669"/>
    <property type="project" value="UniProtKB-SubCell"/>
</dbReference>
<dbReference type="GO" id="GO:0005739">
    <property type="term" value="C:mitochondrion"/>
    <property type="evidence" value="ECO:0007669"/>
    <property type="project" value="Ensembl"/>
</dbReference>
<dbReference type="GO" id="GO:0043025">
    <property type="term" value="C:neuronal cell body"/>
    <property type="evidence" value="ECO:0000314"/>
    <property type="project" value="RGD"/>
</dbReference>
<dbReference type="GO" id="GO:0005886">
    <property type="term" value="C:plasma membrane"/>
    <property type="evidence" value="ECO:0000250"/>
    <property type="project" value="HGNC-UCL"/>
</dbReference>
<dbReference type="GO" id="GO:0031201">
    <property type="term" value="C:SNARE complex"/>
    <property type="evidence" value="ECO:0000314"/>
    <property type="project" value="HGNC-UCL"/>
</dbReference>
<dbReference type="GO" id="GO:0019706">
    <property type="term" value="F:protein-cysteine S-palmitoyltransferase activity"/>
    <property type="evidence" value="ECO:0000250"/>
    <property type="project" value="HGNC-UCL"/>
</dbReference>
<dbReference type="GO" id="GO:0005484">
    <property type="term" value="F:SNAP receptor activity"/>
    <property type="evidence" value="ECO:0000266"/>
    <property type="project" value="RGD"/>
</dbReference>
<dbReference type="GO" id="GO:0006888">
    <property type="term" value="P:endoplasmic reticulum to Golgi vesicle-mediated transport"/>
    <property type="evidence" value="ECO:0000250"/>
    <property type="project" value="HGNC-UCL"/>
</dbReference>
<dbReference type="GO" id="GO:0015031">
    <property type="term" value="P:protein transport"/>
    <property type="evidence" value="ECO:0007669"/>
    <property type="project" value="UniProtKB-KW"/>
</dbReference>
<dbReference type="GO" id="GO:0042147">
    <property type="term" value="P:retrograde transport, endosome to Golgi"/>
    <property type="evidence" value="ECO:0000266"/>
    <property type="project" value="RGD"/>
</dbReference>
<dbReference type="GO" id="GO:0006904">
    <property type="term" value="P:vesicle docking involved in exocytosis"/>
    <property type="evidence" value="ECO:0000250"/>
    <property type="project" value="HGNC-UCL"/>
</dbReference>
<dbReference type="GO" id="GO:0006903">
    <property type="term" value="P:vesicle targeting"/>
    <property type="evidence" value="ECO:0000250"/>
    <property type="project" value="HGNC-UCL"/>
</dbReference>
<dbReference type="CDD" id="cd14824">
    <property type="entry name" value="Longin"/>
    <property type="match status" value="1"/>
</dbReference>
<dbReference type="CDD" id="cd15867">
    <property type="entry name" value="R-SNARE_YKT6"/>
    <property type="match status" value="1"/>
</dbReference>
<dbReference type="FunFam" id="3.30.450.50:FF:000013">
    <property type="entry name" value="Synaptobrevin homolog YKT6"/>
    <property type="match status" value="1"/>
</dbReference>
<dbReference type="FunFam" id="1.20.5.110:FF:000020">
    <property type="entry name" value="synaptobrevin homolog YKT6"/>
    <property type="match status" value="1"/>
</dbReference>
<dbReference type="Gene3D" id="1.20.5.110">
    <property type="match status" value="1"/>
</dbReference>
<dbReference type="Gene3D" id="3.30.450.50">
    <property type="entry name" value="Longin domain"/>
    <property type="match status" value="1"/>
</dbReference>
<dbReference type="InterPro" id="IPR011012">
    <property type="entry name" value="Longin-like_dom_sf"/>
</dbReference>
<dbReference type="InterPro" id="IPR010908">
    <property type="entry name" value="Longin_dom"/>
</dbReference>
<dbReference type="InterPro" id="IPR045848">
    <property type="entry name" value="R-SNARE_YKT6"/>
</dbReference>
<dbReference type="InterPro" id="IPR042855">
    <property type="entry name" value="V_SNARE_CC"/>
</dbReference>
<dbReference type="PANTHER" id="PTHR45806">
    <property type="entry name" value="SYNAPTOBREVIN HOMOLOG YKT6"/>
    <property type="match status" value="1"/>
</dbReference>
<dbReference type="PANTHER" id="PTHR45806:SF1">
    <property type="entry name" value="SYNAPTOBREVIN HOMOLOG YKT6"/>
    <property type="match status" value="1"/>
</dbReference>
<dbReference type="Pfam" id="PF13774">
    <property type="entry name" value="Longin"/>
    <property type="match status" value="1"/>
</dbReference>
<dbReference type="Pfam" id="PF00957">
    <property type="entry name" value="Synaptobrevin"/>
    <property type="match status" value="1"/>
</dbReference>
<dbReference type="SMART" id="SM01270">
    <property type="entry name" value="Longin"/>
    <property type="match status" value="1"/>
</dbReference>
<dbReference type="SUPFAM" id="SSF58038">
    <property type="entry name" value="SNARE fusion complex"/>
    <property type="match status" value="1"/>
</dbReference>
<dbReference type="SUPFAM" id="SSF64356">
    <property type="entry name" value="SNARE-like"/>
    <property type="match status" value="1"/>
</dbReference>
<dbReference type="PROSITE" id="PS50859">
    <property type="entry name" value="LONGIN"/>
    <property type="match status" value="1"/>
</dbReference>
<dbReference type="PROSITE" id="PS50892">
    <property type="entry name" value="V_SNARE"/>
    <property type="match status" value="1"/>
</dbReference>
<comment type="function">
    <text evidence="5">Vesicular soluble NSF attachment protein receptor (v-SNARE) mediating vesicle docking and fusion to a specific acceptor cellular compartment. Functions in endoplasmic reticulum to Golgi transport; as part of a SNARE complex composed of GOSR1, GOSR2 and STX5. Functions in early/recycling endosome to TGN transport; as part of a SNARE complex composed of BET1L, GOSR1 and STX5. Has a S-palmitoyl transferase activity.</text>
</comment>
<comment type="subunit">
    <text evidence="5 6 7">Identified in 2 different SNARE complexes; the first one composed of GOSR1, GOSR2 and STX5 and the second one composed of BET1L, GOSR1 and STX5.</text>
</comment>
<comment type="subcellular location">
    <subcellularLocation>
        <location>Cytoplasm</location>
        <location>Cytosol</location>
    </subcellularLocation>
    <subcellularLocation>
        <location>Cytoplasmic vesicle membrane</location>
        <topology>Lipid-anchor</topology>
        <orientation>Cytoplasmic side</orientation>
    </subcellularLocation>
    <subcellularLocation>
        <location>Golgi apparatus membrane</location>
        <topology>Lipid-anchor</topology>
        <orientation>Cytoplasmic side</orientation>
    </subcellularLocation>
    <text evidence="1">Probably cycles through vesicles between Golgi and endosomes.</text>
</comment>
<comment type="tissue specificity">
    <text evidence="8">Highly expressed by neurons in brain and faintly detected in spleen, lung and kidney (at protein level). Ubiquitously expressed.</text>
</comment>
<comment type="domain">
    <text evidence="1">The longin domain regulates palmitoylation and membrane targeting.</text>
</comment>
<comment type="PTM">
    <text evidence="2">Palmitoylated; catalyzes its own palmitoylation. Palmitoylation is required for Golgi targeting.</text>
</comment>
<comment type="PTM">
    <text evidence="2">Farnesylation is required for Golgi targeting.</text>
</comment>
<comment type="PTM">
    <text evidence="10">(Microbial infection) Targeted and hydrolyzed by C.botulinum neurotoxin type X (BoNT/X) which hydrolyzes the 173-Lys-|-Ser-174 bond and probably inhibits neurotransmitter release (PubMed:28770820). It remains unknown whether BoNT/X is ever produced, or what organisms it targets.</text>
</comment>
<comment type="similarity">
    <text evidence="11">Belongs to the synaptobrevin family.</text>
</comment>
<proteinExistence type="evidence at protein level"/>
<gene>
    <name type="primary">Ykt6</name>
</gene>
<reference key="1">
    <citation type="journal article" date="1999" name="DNA Cell Biol.">
        <title>Characterization of the sequence and expression of a Ykt6 prenylated SNARE from rat.</title>
        <authorList>
            <person name="Catchpoole D.R."/>
            <person name="Wanjin H."/>
        </authorList>
    </citation>
    <scope>NUCLEOTIDE SEQUENCE [MRNA]</scope>
    <source>
        <strain>Sprague-Dawley</strain>
        <tissue>Kidney</tissue>
    </source>
</reference>
<reference key="2">
    <citation type="submission" date="2005-01" db="EMBL/GenBank/DDBJ databases">
        <title>Expression of rat Ykt6 in rat basophil (RBL) cells.</title>
        <authorList>
            <person name="Lippert U."/>
            <person name="Ferrari D.M."/>
            <person name="Jahn R."/>
        </authorList>
    </citation>
    <scope>NUCLEOTIDE SEQUENCE [MRNA]</scope>
    <source>
        <tissue>Peripheral blood</tissue>
    </source>
</reference>
<reference key="3">
    <citation type="journal article" date="2001" name="J. Biol. Chem.">
        <title>Ykt6 forms a SNARE complex with syntaxin 5, GS28, and Bet1 and participates in a late stage in endoplasmic reticulum-Golgi transport.</title>
        <authorList>
            <person name="Zhang T."/>
            <person name="Hong W."/>
        </authorList>
    </citation>
    <scope>FUNCTION</scope>
    <scope>SUBCELLULAR LOCATION</scope>
    <scope>INTERACTION WITH GOSR1; GOSR2 AND STX5</scope>
</reference>
<reference key="4">
    <citation type="journal article" date="2002" name="J. Cell Biol.">
        <title>Sequential tethering of Golgins and catalysis of SNAREpin assembly by the vesicle-tethering protein p115.</title>
        <authorList>
            <person name="Shorter J."/>
            <person name="Beard M.B."/>
            <person name="Seemann J."/>
            <person name="Dirac-Svejstrup A.B."/>
            <person name="Warren G."/>
        </authorList>
    </citation>
    <scope>INTERACTION WITH BET1L; GOSR1 AND STX5</scope>
</reference>
<reference key="5">
    <citation type="journal article" date="2002" name="Mol. Biol. Cell">
        <title>GS15 forms a SNARE complex with syntaxin 5, GS28, and Ykt6 and is implicated in traffic in the early cisternae of the Golgi apparatus.</title>
        <authorList>
            <person name="Xu Y."/>
            <person name="Martin S."/>
            <person name="James D.E."/>
            <person name="Hong W."/>
        </authorList>
    </citation>
    <scope>INTERACTION WITH BET1L; GOSR1 AND STX5</scope>
</reference>
<reference key="6">
    <citation type="journal article" date="2003" name="Mol. Biol. Cell">
        <title>Mammalian ykt6 is a neuronal SNARE targeted to a specialized compartment by its profilin-like amino terminal domain.</title>
        <authorList>
            <person name="Hasegawa H."/>
            <person name="Zinsser S."/>
            <person name="Rhee Y."/>
            <person name="Vik-Mo E.O."/>
            <person name="Davanger S."/>
            <person name="Hay J.C."/>
        </authorList>
    </citation>
    <scope>TISSUE SPECIFICITY</scope>
    <scope>ISOPRENYLATION</scope>
    <scope>SUBCELLULAR LOCATION</scope>
    <scope>MUTAGENESIS OF CYS-194 AND CYS-195</scope>
</reference>
<reference key="7">
    <citation type="journal article" date="2004" name="J. Cell Sci.">
        <title>Intramolecular protein-protein and protein-lipid interactions control the conformation and subcellular targeting of neuronal Ykt6.</title>
        <authorList>
            <person name="Hasegawa H."/>
            <person name="Yang Z."/>
            <person name="Oltedal L."/>
            <person name="Davanger S."/>
            <person name="Hay J.C."/>
        </authorList>
    </citation>
    <scope>SUBCELLULAR LOCATION</scope>
    <scope>MUTAGENESIS OF VAL-8; PHE-39; PHE-42; ARG-50; ARG-56 AND VAL-59</scope>
</reference>
<reference key="8">
    <citation type="journal article" date="2017" name="Nat. Commun.">
        <title>Identification and characterization of a novel botulinum neurotoxin.</title>
        <authorList>
            <person name="Zhang S."/>
            <person name="Masuyer G."/>
            <person name="Zhang J."/>
            <person name="Shen Y."/>
            <person name="Lundin D."/>
            <person name="Henriksson L."/>
            <person name="Miyashita S.I."/>
            <person name="Martinez-Carranza M."/>
            <person name="Dong M."/>
            <person name="Stenmark P."/>
        </authorList>
    </citation>
    <scope>PROTEOLYTIC CLEAVAGE (MICROBIAL INFECTION) BY C.BOTULINUM NEUROTOXIN TYPE X</scope>
</reference>
<feature type="chain" id="PRO_0000280711" description="Synaptobrevin homolog YKT6">
    <location>
        <begin position="1"/>
        <end position="195"/>
    </location>
</feature>
<feature type="propeptide" id="PRO_0000396663" description="Removed in mature form" evidence="1">
    <location>
        <begin position="196"/>
        <end position="198"/>
    </location>
</feature>
<feature type="domain" description="Longin" evidence="3">
    <location>
        <begin position="8"/>
        <end position="131"/>
    </location>
</feature>
<feature type="domain" description="v-SNARE coiled-coil homology" evidence="4">
    <location>
        <begin position="138"/>
        <end position="198"/>
    </location>
</feature>
<feature type="site" description="(Microbial infection) Cleavage; by C.botulinum neurotoxin type X (BoNT/X)" evidence="10">
    <location>
        <begin position="173"/>
        <end position="174"/>
    </location>
</feature>
<feature type="modified residue" description="Phosphoserine" evidence="2">
    <location>
        <position position="159"/>
    </location>
</feature>
<feature type="modified residue" description="Cysteine methyl ester" evidence="1">
    <location>
        <position position="195"/>
    </location>
</feature>
<feature type="lipid moiety-binding region" description="S-palmitoyl cysteine" evidence="1">
    <location>
        <position position="194"/>
    </location>
</feature>
<feature type="lipid moiety-binding region" description="S-farnesyl cysteine" evidence="1">
    <location>
        <position position="195"/>
    </location>
</feature>
<feature type="mutagenesis site" description="Mistargeted to Golgi and plasma membrane. Normally targeted to vesicular structures; when associated with A-194 or A-195." evidence="9">
    <original>V</original>
    <variation>D</variation>
    <location>
        <position position="8"/>
    </location>
</feature>
<feature type="mutagenesis site" description="Mistargeted to Golgi and plasma membrane; when associated with E-42. Normally targeted to vesicular structures; when associated with E-42 and A-195." evidence="9">
    <original>F</original>
    <variation>E</variation>
    <location>
        <position position="39"/>
    </location>
</feature>
<feature type="mutagenesis site" description="Mistargeted to Golgi and plasma membrane; when associated with E-39. Normally targeted to vesicular structures; when associated with E-39 and A-195." evidence="9">
    <original>F</original>
    <variation>E</variation>
    <location>
        <position position="42"/>
    </location>
</feature>
<feature type="mutagenesis site" description="Mistargeted to Golgi and plasma membrane; when associated with E-56. Normally targeted to vesicular structures; when associated with E-56 and A-195." evidence="9">
    <original>R</original>
    <variation>E</variation>
    <location>
        <position position="50"/>
    </location>
</feature>
<feature type="mutagenesis site" description="Mistargeted to Golgi and plasma membrane; when associated with E-50. Normally targeted to vesicular structures; when associated with E-50 and A-195." evidence="9">
    <original>R</original>
    <variation>E</variation>
    <location>
        <position position="56"/>
    </location>
</feature>
<feature type="mutagenesis site" description="Mistargeted to Golgi and plasma membrane." evidence="9">
    <original>V</original>
    <variation>E</variation>
    <location>
        <position position="59"/>
    </location>
</feature>
<feature type="mutagenesis site" description="Loss of prenylation and normally targeted to vesicular structures; when associated with A-195. Normally targeted to vesicular structures; when associated with D-8." evidence="8">
    <original>C</original>
    <variation>A</variation>
    <location>
        <position position="194"/>
    </location>
</feature>
<feature type="mutagenesis site" description="Loss of prenylation and normally targeted to vesicular structures; when associated with A-194. Normally targeted to vesicular structures; when associated with D-8. Normally targeted to vesicular structures; when associated with E-39 and E-42. Normally targeted to vesicular structures; when associated with E-50 and E-56." evidence="8">
    <original>C</original>
    <variation>A</variation>
    <location>
        <position position="195"/>
    </location>
</feature>
<feature type="sequence conflict" description="In Ref. 1; AAD09152." evidence="11" ref="1">
    <original>F</original>
    <variation>L</variation>
    <location>
        <position position="9"/>
    </location>
</feature>
<feature type="sequence conflict" description="In Ref. 1; AAD09152." evidence="11" ref="1">
    <original>P</original>
    <variation>K</variation>
    <location>
        <position position="14"/>
    </location>
</feature>
<feature type="sequence conflict" description="In Ref. 1; AAD09152." evidence="11" ref="1">
    <original>E</original>
    <variation>Q</variation>
    <location>
        <position position="100"/>
    </location>
</feature>
<feature type="sequence conflict" description="In Ref. 1; AAD09152." evidence="11" ref="1">
    <original>R</original>
    <variation>T</variation>
    <location>
        <position position="107"/>
    </location>
</feature>
<feature type="strand" evidence="12">
    <location>
        <begin position="3"/>
        <end position="11"/>
    </location>
</feature>
<feature type="strand" evidence="12">
    <location>
        <begin position="16"/>
        <end position="23"/>
    </location>
</feature>
<feature type="turn" evidence="12">
    <location>
        <begin position="30"/>
        <end position="32"/>
    </location>
</feature>
<feature type="helix" evidence="12">
    <location>
        <begin position="33"/>
        <end position="49"/>
    </location>
</feature>
<feature type="strand" evidence="12">
    <location>
        <begin position="55"/>
        <end position="60"/>
    </location>
</feature>
<feature type="strand" evidence="12">
    <location>
        <begin position="62"/>
        <end position="70"/>
    </location>
</feature>
<feature type="strand" evidence="12">
    <location>
        <begin position="74"/>
        <end position="82"/>
    </location>
</feature>
<feature type="helix" evidence="12">
    <location>
        <begin position="87"/>
        <end position="104"/>
    </location>
</feature>
<feature type="helix" evidence="12">
    <location>
        <begin position="107"/>
        <end position="109"/>
    </location>
</feature>
<feature type="turn" evidence="12">
    <location>
        <begin position="115"/>
        <end position="117"/>
    </location>
</feature>
<feature type="helix" evidence="12">
    <location>
        <begin position="123"/>
        <end position="129"/>
    </location>
</feature>
<feature type="helix" evidence="12">
    <location>
        <begin position="133"/>
        <end position="135"/>
    </location>
</feature>
<feature type="helix" evidence="12">
    <location>
        <begin position="140"/>
        <end position="147"/>
    </location>
</feature>
<feature type="strand" evidence="12">
    <location>
        <begin position="152"/>
        <end position="156"/>
    </location>
</feature>
<feature type="helix" evidence="12">
    <location>
        <begin position="157"/>
        <end position="159"/>
    </location>
</feature>
<feature type="helix" evidence="12">
    <location>
        <begin position="167"/>
        <end position="173"/>
    </location>
</feature>
<feature type="strand" evidence="12">
    <location>
        <begin position="175"/>
        <end position="177"/>
    </location>
</feature>
<feature type="helix" evidence="12">
    <location>
        <begin position="179"/>
        <end position="191"/>
    </location>
</feature>
<accession>Q5EGY4</accession>
<accession>O35487</accession>
<name>YKT6_RAT</name>
<protein>
    <recommendedName>
        <fullName>Synaptobrevin homolog YKT6</fullName>
        <ecNumber>2.3.1.-</ecNumber>
    </recommendedName>
</protein>
<evidence type="ECO:0000250" key="1"/>
<evidence type="ECO:0000250" key="2">
    <source>
        <dbReference type="UniProtKB" id="O15498"/>
    </source>
</evidence>
<evidence type="ECO:0000255" key="3">
    <source>
        <dbReference type="PROSITE-ProRule" id="PRU00231"/>
    </source>
</evidence>
<evidence type="ECO:0000255" key="4">
    <source>
        <dbReference type="PROSITE-ProRule" id="PRU00290"/>
    </source>
</evidence>
<evidence type="ECO:0000269" key="5">
    <source>
    </source>
</evidence>
<evidence type="ECO:0000269" key="6">
    <source>
    </source>
</evidence>
<evidence type="ECO:0000269" key="7">
    <source>
    </source>
</evidence>
<evidence type="ECO:0000269" key="8">
    <source>
    </source>
</evidence>
<evidence type="ECO:0000269" key="9">
    <source>
    </source>
</evidence>
<evidence type="ECO:0000269" key="10">
    <source>
    </source>
</evidence>
<evidence type="ECO:0000305" key="11"/>
<evidence type="ECO:0007829" key="12">
    <source>
        <dbReference type="PDB" id="3KYQ"/>
    </source>
</evidence>
<keyword id="KW-0002">3D-structure</keyword>
<keyword id="KW-0175">Coiled coil</keyword>
<keyword id="KW-0963">Cytoplasm</keyword>
<keyword id="KW-0968">Cytoplasmic vesicle</keyword>
<keyword id="KW-0931">ER-Golgi transport</keyword>
<keyword id="KW-0333">Golgi apparatus</keyword>
<keyword id="KW-0449">Lipoprotein</keyword>
<keyword id="KW-0472">Membrane</keyword>
<keyword id="KW-0488">Methylation</keyword>
<keyword id="KW-0564">Palmitate</keyword>
<keyword id="KW-0597">Phosphoprotein</keyword>
<keyword id="KW-0636">Prenylation</keyword>
<keyword id="KW-0653">Protein transport</keyword>
<keyword id="KW-1185">Reference proteome</keyword>
<keyword id="KW-0808">Transferase</keyword>
<keyword id="KW-0813">Transport</keyword>